<organism>
    <name type="scientific">Salmonella agona (strain SL483)</name>
    <dbReference type="NCBI Taxonomy" id="454166"/>
    <lineage>
        <taxon>Bacteria</taxon>
        <taxon>Pseudomonadati</taxon>
        <taxon>Pseudomonadota</taxon>
        <taxon>Gammaproteobacteria</taxon>
        <taxon>Enterobacterales</taxon>
        <taxon>Enterobacteriaceae</taxon>
        <taxon>Salmonella</taxon>
    </lineage>
</organism>
<gene>
    <name evidence="1" type="primary">ruvC</name>
    <name type="ordered locus">SeAg_B1225</name>
</gene>
<keyword id="KW-0963">Cytoplasm</keyword>
<keyword id="KW-0227">DNA damage</keyword>
<keyword id="KW-0233">DNA recombination</keyword>
<keyword id="KW-0234">DNA repair</keyword>
<keyword id="KW-0238">DNA-binding</keyword>
<keyword id="KW-0255">Endonuclease</keyword>
<keyword id="KW-0378">Hydrolase</keyword>
<keyword id="KW-0460">Magnesium</keyword>
<keyword id="KW-0479">Metal-binding</keyword>
<keyword id="KW-0540">Nuclease</keyword>
<evidence type="ECO:0000255" key="1">
    <source>
        <dbReference type="HAMAP-Rule" id="MF_00034"/>
    </source>
</evidence>
<accession>B5F3J2</accession>
<name>RUVC_SALA4</name>
<protein>
    <recommendedName>
        <fullName evidence="1">Crossover junction endodeoxyribonuclease RuvC</fullName>
        <ecNumber evidence="1">3.1.21.10</ecNumber>
    </recommendedName>
    <alternativeName>
        <fullName evidence="1">Holliday junction nuclease RuvC</fullName>
    </alternativeName>
    <alternativeName>
        <fullName evidence="1">Holliday junction resolvase RuvC</fullName>
    </alternativeName>
</protein>
<feature type="chain" id="PRO_1000090555" description="Crossover junction endodeoxyribonuclease RuvC">
    <location>
        <begin position="1"/>
        <end position="173"/>
    </location>
</feature>
<feature type="active site" evidence="1">
    <location>
        <position position="8"/>
    </location>
</feature>
<feature type="active site" evidence="1">
    <location>
        <position position="67"/>
    </location>
</feature>
<feature type="active site" evidence="1">
    <location>
        <position position="139"/>
    </location>
</feature>
<feature type="binding site" evidence="1">
    <location>
        <position position="8"/>
    </location>
    <ligand>
        <name>Mg(2+)</name>
        <dbReference type="ChEBI" id="CHEBI:18420"/>
        <label>1</label>
    </ligand>
</feature>
<feature type="binding site" evidence="1">
    <location>
        <position position="67"/>
    </location>
    <ligand>
        <name>Mg(2+)</name>
        <dbReference type="ChEBI" id="CHEBI:18420"/>
        <label>2</label>
    </ligand>
</feature>
<feature type="binding site" evidence="1">
    <location>
        <position position="139"/>
    </location>
    <ligand>
        <name>Mg(2+)</name>
        <dbReference type="ChEBI" id="CHEBI:18420"/>
        <label>1</label>
    </ligand>
</feature>
<proteinExistence type="inferred from homology"/>
<dbReference type="EC" id="3.1.21.10" evidence="1"/>
<dbReference type="EMBL" id="CP001138">
    <property type="protein sequence ID" value="ACH50829.1"/>
    <property type="molecule type" value="Genomic_DNA"/>
</dbReference>
<dbReference type="RefSeq" id="WP_000022509.1">
    <property type="nucleotide sequence ID" value="NC_011149.1"/>
</dbReference>
<dbReference type="SMR" id="B5F3J2"/>
<dbReference type="GeneID" id="93033412"/>
<dbReference type="KEGG" id="sea:SeAg_B1225"/>
<dbReference type="HOGENOM" id="CLU_091257_2_1_6"/>
<dbReference type="Proteomes" id="UP000008819">
    <property type="component" value="Chromosome"/>
</dbReference>
<dbReference type="GO" id="GO:0005737">
    <property type="term" value="C:cytoplasm"/>
    <property type="evidence" value="ECO:0007669"/>
    <property type="project" value="UniProtKB-SubCell"/>
</dbReference>
<dbReference type="GO" id="GO:0048476">
    <property type="term" value="C:Holliday junction resolvase complex"/>
    <property type="evidence" value="ECO:0007669"/>
    <property type="project" value="UniProtKB-UniRule"/>
</dbReference>
<dbReference type="GO" id="GO:0008821">
    <property type="term" value="F:crossover junction DNA endonuclease activity"/>
    <property type="evidence" value="ECO:0007669"/>
    <property type="project" value="UniProtKB-UniRule"/>
</dbReference>
<dbReference type="GO" id="GO:0003677">
    <property type="term" value="F:DNA binding"/>
    <property type="evidence" value="ECO:0007669"/>
    <property type="project" value="UniProtKB-KW"/>
</dbReference>
<dbReference type="GO" id="GO:0000287">
    <property type="term" value="F:magnesium ion binding"/>
    <property type="evidence" value="ECO:0007669"/>
    <property type="project" value="UniProtKB-UniRule"/>
</dbReference>
<dbReference type="GO" id="GO:0006310">
    <property type="term" value="P:DNA recombination"/>
    <property type="evidence" value="ECO:0007669"/>
    <property type="project" value="UniProtKB-UniRule"/>
</dbReference>
<dbReference type="GO" id="GO:0006281">
    <property type="term" value="P:DNA repair"/>
    <property type="evidence" value="ECO:0007669"/>
    <property type="project" value="UniProtKB-UniRule"/>
</dbReference>
<dbReference type="CDD" id="cd16962">
    <property type="entry name" value="RuvC"/>
    <property type="match status" value="1"/>
</dbReference>
<dbReference type="FunFam" id="3.30.420.10:FF:000002">
    <property type="entry name" value="Crossover junction endodeoxyribonuclease RuvC"/>
    <property type="match status" value="1"/>
</dbReference>
<dbReference type="Gene3D" id="3.30.420.10">
    <property type="entry name" value="Ribonuclease H-like superfamily/Ribonuclease H"/>
    <property type="match status" value="1"/>
</dbReference>
<dbReference type="HAMAP" id="MF_00034">
    <property type="entry name" value="RuvC"/>
    <property type="match status" value="1"/>
</dbReference>
<dbReference type="InterPro" id="IPR012337">
    <property type="entry name" value="RNaseH-like_sf"/>
</dbReference>
<dbReference type="InterPro" id="IPR036397">
    <property type="entry name" value="RNaseH_sf"/>
</dbReference>
<dbReference type="InterPro" id="IPR020563">
    <property type="entry name" value="X-over_junc_endoDNase_Mg_BS"/>
</dbReference>
<dbReference type="InterPro" id="IPR002176">
    <property type="entry name" value="X-over_junc_endoDNase_RuvC"/>
</dbReference>
<dbReference type="NCBIfam" id="NF000711">
    <property type="entry name" value="PRK00039.2-1"/>
    <property type="match status" value="1"/>
</dbReference>
<dbReference type="NCBIfam" id="TIGR00228">
    <property type="entry name" value="ruvC"/>
    <property type="match status" value="1"/>
</dbReference>
<dbReference type="PANTHER" id="PTHR30194">
    <property type="entry name" value="CROSSOVER JUNCTION ENDODEOXYRIBONUCLEASE RUVC"/>
    <property type="match status" value="1"/>
</dbReference>
<dbReference type="PANTHER" id="PTHR30194:SF3">
    <property type="entry name" value="CROSSOVER JUNCTION ENDODEOXYRIBONUCLEASE RUVC"/>
    <property type="match status" value="1"/>
</dbReference>
<dbReference type="Pfam" id="PF02075">
    <property type="entry name" value="RuvC"/>
    <property type="match status" value="1"/>
</dbReference>
<dbReference type="PRINTS" id="PR00696">
    <property type="entry name" value="RSOLVASERUVC"/>
</dbReference>
<dbReference type="SUPFAM" id="SSF53098">
    <property type="entry name" value="Ribonuclease H-like"/>
    <property type="match status" value="1"/>
</dbReference>
<dbReference type="PROSITE" id="PS01321">
    <property type="entry name" value="RUVC"/>
    <property type="match status" value="1"/>
</dbReference>
<sequence length="173" mass="18791">MSIILGIDPGSRITGYGVIRQVGRQLTYLGSGCIRTKVDDLPSRLKLIYAGVTEIITQFQPDYFAIEQVFMAKNADSALKLGQARGVAIVAAVNQELPVFEYAARQVKQTVVGIGSAEKSQVQHMVRTLLKLPANPQADAADALAIAITHCHVSQNAMQMSESRLNLARGRLR</sequence>
<comment type="function">
    <text evidence="1">The RuvA-RuvB-RuvC complex processes Holliday junction (HJ) DNA during genetic recombination and DNA repair. Endonuclease that resolves HJ intermediates. Cleaves cruciform DNA by making single-stranded nicks across the HJ at symmetrical positions within the homologous arms, yielding a 5'-phosphate and a 3'-hydroxyl group; requires a central core of homology in the junction. The consensus cleavage sequence is 5'-(A/T)TT(C/G)-3'. Cleavage occurs on the 3'-side of the TT dinucleotide at the point of strand exchange. HJ branch migration catalyzed by RuvA-RuvB allows RuvC to scan DNA until it finds its consensus sequence, where it cleaves and resolves the cruciform DNA.</text>
</comment>
<comment type="catalytic activity">
    <reaction evidence="1">
        <text>Endonucleolytic cleavage at a junction such as a reciprocal single-stranded crossover between two homologous DNA duplexes (Holliday junction).</text>
        <dbReference type="EC" id="3.1.21.10"/>
    </reaction>
</comment>
<comment type="cofactor">
    <cofactor evidence="1">
        <name>Mg(2+)</name>
        <dbReference type="ChEBI" id="CHEBI:18420"/>
    </cofactor>
    <text evidence="1">Binds 2 Mg(2+) ion per subunit.</text>
</comment>
<comment type="subunit">
    <text evidence="1">Homodimer which binds Holliday junction (HJ) DNA. The HJ becomes 2-fold symmetrical on binding to RuvC with unstacked arms; it has a different conformation from HJ DNA in complex with RuvA. In the full resolvosome a probable DNA-RuvA(4)-RuvB(12)-RuvC(2) complex forms which resolves the HJ.</text>
</comment>
<comment type="subcellular location">
    <subcellularLocation>
        <location evidence="1">Cytoplasm</location>
    </subcellularLocation>
</comment>
<comment type="similarity">
    <text evidence="1">Belongs to the RuvC family.</text>
</comment>
<reference key="1">
    <citation type="journal article" date="2011" name="J. Bacteriol.">
        <title>Comparative genomics of 28 Salmonella enterica isolates: evidence for CRISPR-mediated adaptive sublineage evolution.</title>
        <authorList>
            <person name="Fricke W.F."/>
            <person name="Mammel M.K."/>
            <person name="McDermott P.F."/>
            <person name="Tartera C."/>
            <person name="White D.G."/>
            <person name="Leclerc J.E."/>
            <person name="Ravel J."/>
            <person name="Cebula T.A."/>
        </authorList>
    </citation>
    <scope>NUCLEOTIDE SEQUENCE [LARGE SCALE GENOMIC DNA]</scope>
    <source>
        <strain>SL483</strain>
    </source>
</reference>